<reference key="1">
    <citation type="journal article" date="1994" name="J. Biochem.">
        <title>On a Bowman-Birk family proteinase inhibitor from Erythrina variegata seeds.</title>
        <authorList>
            <person name="Kimura M."/>
            <person name="Kouzuma Y."/>
            <person name="Abe K."/>
            <person name="Yamasaki N."/>
        </authorList>
    </citation>
    <scope>PROTEIN SEQUENCE</scope>
    <scope>REACTIVE SITES</scope>
    <source>
        <strain>Var. Orientalis</strain>
        <tissue>Seed</tissue>
    </source>
</reference>
<keyword id="KW-0903">Direct protein sequencing</keyword>
<keyword id="KW-1015">Disulfide bond</keyword>
<keyword id="KW-0646">Protease inhibitor</keyword>
<keyword id="KW-0722">Serine protease inhibitor</keyword>
<comment type="function">
    <text>Strong inhibitor of trypsin with a 1:1 stoichiometry. Weaker inhibitor of chymotrypsin.</text>
</comment>
<comment type="similarity">
    <text evidence="2">Belongs to the Bowman-Birk serine protease inhibitor family.</text>
</comment>
<evidence type="ECO:0000250" key="1">
    <source>
        <dbReference type="UniProtKB" id="P80321"/>
    </source>
</evidence>
<evidence type="ECO:0000305" key="2"/>
<accession>P81705</accession>
<protein>
    <recommendedName>
        <fullName>Bowman-Birk type proteinase inhibitor</fullName>
        <shortName>EBI</shortName>
    </recommendedName>
</protein>
<proteinExistence type="evidence at protein level"/>
<feature type="chain" id="PRO_0000105838" description="Bowman-Birk type proteinase inhibitor">
    <location>
        <begin position="1"/>
        <end position="61"/>
    </location>
</feature>
<feature type="site" description="Reactive bond for trypsin">
    <location>
        <begin position="12"/>
        <end position="13"/>
    </location>
</feature>
<feature type="site" description="Reactive bond for chymotrypsin">
    <location>
        <begin position="38"/>
        <end position="39"/>
    </location>
</feature>
<feature type="disulfide bond" evidence="1">
    <location>
        <begin position="4"/>
        <end position="57"/>
    </location>
</feature>
<feature type="disulfide bond" evidence="1">
    <location>
        <begin position="5"/>
        <end position="20"/>
    </location>
</feature>
<feature type="disulfide bond" evidence="1">
    <location>
        <begin position="8"/>
        <end position="53"/>
    </location>
</feature>
<feature type="disulfide bond" evidence="1">
    <location>
        <begin position="10"/>
        <end position="18"/>
    </location>
</feature>
<feature type="disulfide bond" evidence="1">
    <location>
        <begin position="27"/>
        <end position="34"/>
    </location>
</feature>
<feature type="disulfide bond" evidence="1">
    <location>
        <begin position="31"/>
        <end position="46"/>
    </location>
</feature>
<feature type="disulfide bond" evidence="1">
    <location>
        <begin position="36"/>
        <end position="44"/>
    </location>
</feature>
<dbReference type="PIR" id="JX0309">
    <property type="entry name" value="JX0309"/>
</dbReference>
<dbReference type="SMR" id="P81705"/>
<dbReference type="MEROPS" id="I12.003"/>
<dbReference type="GO" id="GO:0005576">
    <property type="term" value="C:extracellular region"/>
    <property type="evidence" value="ECO:0007669"/>
    <property type="project" value="InterPro"/>
</dbReference>
<dbReference type="GO" id="GO:0004867">
    <property type="term" value="F:serine-type endopeptidase inhibitor activity"/>
    <property type="evidence" value="ECO:0007669"/>
    <property type="project" value="UniProtKB-KW"/>
</dbReference>
<dbReference type="CDD" id="cd00023">
    <property type="entry name" value="BBI"/>
    <property type="match status" value="1"/>
</dbReference>
<dbReference type="Gene3D" id="2.10.69.10">
    <property type="entry name" value="Cysteine Protease (Bromelain) Inhibitor, subunit H"/>
    <property type="match status" value="1"/>
</dbReference>
<dbReference type="InterPro" id="IPR035995">
    <property type="entry name" value="Bowman-Birk_prot_inh"/>
</dbReference>
<dbReference type="InterPro" id="IPR000877">
    <property type="entry name" value="Prot_inh_BBI"/>
</dbReference>
<dbReference type="Pfam" id="PF00228">
    <property type="entry name" value="Bowman-Birk_leg"/>
    <property type="match status" value="2"/>
</dbReference>
<dbReference type="SMART" id="SM00269">
    <property type="entry name" value="BowB"/>
    <property type="match status" value="1"/>
</dbReference>
<dbReference type="SUPFAM" id="SSF57247">
    <property type="entry name" value="Bowman-Birk inhibitor, BBI"/>
    <property type="match status" value="1"/>
</dbReference>
<organism>
    <name type="scientific">Erythrina variegata</name>
    <name type="common">Indian coral tree</name>
    <name type="synonym">Erythrina indica</name>
    <dbReference type="NCBI Taxonomy" id="3845"/>
    <lineage>
        <taxon>Eukaryota</taxon>
        <taxon>Viridiplantae</taxon>
        <taxon>Streptophyta</taxon>
        <taxon>Embryophyta</taxon>
        <taxon>Tracheophyta</taxon>
        <taxon>Spermatophyta</taxon>
        <taxon>Magnoliopsida</taxon>
        <taxon>eudicotyledons</taxon>
        <taxon>Gunneridae</taxon>
        <taxon>Pentapetalae</taxon>
        <taxon>rosids</taxon>
        <taxon>fabids</taxon>
        <taxon>Fabales</taxon>
        <taxon>Fabaceae</taxon>
        <taxon>Papilionoideae</taxon>
        <taxon>50 kb inversion clade</taxon>
        <taxon>NPAAA clade</taxon>
        <taxon>indigoferoid/millettioid clade</taxon>
        <taxon>Phaseoleae</taxon>
        <taxon>Erythrina</taxon>
    </lineage>
</organism>
<sequence>TSACCDKCFCTKSNPPICQCRDVGETCHSACKFCICALSYPAQCHCLDQNTFCYDKCDSDS</sequence>
<name>IBB_ERYVA</name>